<reference key="1">
    <citation type="journal article" date="2005" name="Science">
        <title>The transcriptional landscape of the mammalian genome.</title>
        <authorList>
            <person name="Carninci P."/>
            <person name="Kasukawa T."/>
            <person name="Katayama S."/>
            <person name="Gough J."/>
            <person name="Frith M.C."/>
            <person name="Maeda N."/>
            <person name="Oyama R."/>
            <person name="Ravasi T."/>
            <person name="Lenhard B."/>
            <person name="Wells C."/>
            <person name="Kodzius R."/>
            <person name="Shimokawa K."/>
            <person name="Bajic V.B."/>
            <person name="Brenner S.E."/>
            <person name="Batalov S."/>
            <person name="Forrest A.R."/>
            <person name="Zavolan M."/>
            <person name="Davis M.J."/>
            <person name="Wilming L.G."/>
            <person name="Aidinis V."/>
            <person name="Allen J.E."/>
            <person name="Ambesi-Impiombato A."/>
            <person name="Apweiler R."/>
            <person name="Aturaliya R.N."/>
            <person name="Bailey T.L."/>
            <person name="Bansal M."/>
            <person name="Baxter L."/>
            <person name="Beisel K.W."/>
            <person name="Bersano T."/>
            <person name="Bono H."/>
            <person name="Chalk A.M."/>
            <person name="Chiu K.P."/>
            <person name="Choudhary V."/>
            <person name="Christoffels A."/>
            <person name="Clutterbuck D.R."/>
            <person name="Crowe M.L."/>
            <person name="Dalla E."/>
            <person name="Dalrymple B.P."/>
            <person name="de Bono B."/>
            <person name="Della Gatta G."/>
            <person name="di Bernardo D."/>
            <person name="Down T."/>
            <person name="Engstrom P."/>
            <person name="Fagiolini M."/>
            <person name="Faulkner G."/>
            <person name="Fletcher C.F."/>
            <person name="Fukushima T."/>
            <person name="Furuno M."/>
            <person name="Futaki S."/>
            <person name="Gariboldi M."/>
            <person name="Georgii-Hemming P."/>
            <person name="Gingeras T.R."/>
            <person name="Gojobori T."/>
            <person name="Green R.E."/>
            <person name="Gustincich S."/>
            <person name="Harbers M."/>
            <person name="Hayashi Y."/>
            <person name="Hensch T.K."/>
            <person name="Hirokawa N."/>
            <person name="Hill D."/>
            <person name="Huminiecki L."/>
            <person name="Iacono M."/>
            <person name="Ikeo K."/>
            <person name="Iwama A."/>
            <person name="Ishikawa T."/>
            <person name="Jakt M."/>
            <person name="Kanapin A."/>
            <person name="Katoh M."/>
            <person name="Kawasawa Y."/>
            <person name="Kelso J."/>
            <person name="Kitamura H."/>
            <person name="Kitano H."/>
            <person name="Kollias G."/>
            <person name="Krishnan S.P."/>
            <person name="Kruger A."/>
            <person name="Kummerfeld S.K."/>
            <person name="Kurochkin I.V."/>
            <person name="Lareau L.F."/>
            <person name="Lazarevic D."/>
            <person name="Lipovich L."/>
            <person name="Liu J."/>
            <person name="Liuni S."/>
            <person name="McWilliam S."/>
            <person name="Madan Babu M."/>
            <person name="Madera M."/>
            <person name="Marchionni L."/>
            <person name="Matsuda H."/>
            <person name="Matsuzawa S."/>
            <person name="Miki H."/>
            <person name="Mignone F."/>
            <person name="Miyake S."/>
            <person name="Morris K."/>
            <person name="Mottagui-Tabar S."/>
            <person name="Mulder N."/>
            <person name="Nakano N."/>
            <person name="Nakauchi H."/>
            <person name="Ng P."/>
            <person name="Nilsson R."/>
            <person name="Nishiguchi S."/>
            <person name="Nishikawa S."/>
            <person name="Nori F."/>
            <person name="Ohara O."/>
            <person name="Okazaki Y."/>
            <person name="Orlando V."/>
            <person name="Pang K.C."/>
            <person name="Pavan W.J."/>
            <person name="Pavesi G."/>
            <person name="Pesole G."/>
            <person name="Petrovsky N."/>
            <person name="Piazza S."/>
            <person name="Reed J."/>
            <person name="Reid J.F."/>
            <person name="Ring B.Z."/>
            <person name="Ringwald M."/>
            <person name="Rost B."/>
            <person name="Ruan Y."/>
            <person name="Salzberg S.L."/>
            <person name="Sandelin A."/>
            <person name="Schneider C."/>
            <person name="Schoenbach C."/>
            <person name="Sekiguchi K."/>
            <person name="Semple C.A."/>
            <person name="Seno S."/>
            <person name="Sessa L."/>
            <person name="Sheng Y."/>
            <person name="Shibata Y."/>
            <person name="Shimada H."/>
            <person name="Shimada K."/>
            <person name="Silva D."/>
            <person name="Sinclair B."/>
            <person name="Sperling S."/>
            <person name="Stupka E."/>
            <person name="Sugiura K."/>
            <person name="Sultana R."/>
            <person name="Takenaka Y."/>
            <person name="Taki K."/>
            <person name="Tammoja K."/>
            <person name="Tan S.L."/>
            <person name="Tang S."/>
            <person name="Taylor M.S."/>
            <person name="Tegner J."/>
            <person name="Teichmann S.A."/>
            <person name="Ueda H.R."/>
            <person name="van Nimwegen E."/>
            <person name="Verardo R."/>
            <person name="Wei C.L."/>
            <person name="Yagi K."/>
            <person name="Yamanishi H."/>
            <person name="Zabarovsky E."/>
            <person name="Zhu S."/>
            <person name="Zimmer A."/>
            <person name="Hide W."/>
            <person name="Bult C."/>
            <person name="Grimmond S.M."/>
            <person name="Teasdale R.D."/>
            <person name="Liu E.T."/>
            <person name="Brusic V."/>
            <person name="Quackenbush J."/>
            <person name="Wahlestedt C."/>
            <person name="Mattick J.S."/>
            <person name="Hume D.A."/>
            <person name="Kai C."/>
            <person name="Sasaki D."/>
            <person name="Tomaru Y."/>
            <person name="Fukuda S."/>
            <person name="Kanamori-Katayama M."/>
            <person name="Suzuki M."/>
            <person name="Aoki J."/>
            <person name="Arakawa T."/>
            <person name="Iida J."/>
            <person name="Imamura K."/>
            <person name="Itoh M."/>
            <person name="Kato T."/>
            <person name="Kawaji H."/>
            <person name="Kawagashira N."/>
            <person name="Kawashima T."/>
            <person name="Kojima M."/>
            <person name="Kondo S."/>
            <person name="Konno H."/>
            <person name="Nakano K."/>
            <person name="Ninomiya N."/>
            <person name="Nishio T."/>
            <person name="Okada M."/>
            <person name="Plessy C."/>
            <person name="Shibata K."/>
            <person name="Shiraki T."/>
            <person name="Suzuki S."/>
            <person name="Tagami M."/>
            <person name="Waki K."/>
            <person name="Watahiki A."/>
            <person name="Okamura-Oho Y."/>
            <person name="Suzuki H."/>
            <person name="Kawai J."/>
            <person name="Hayashizaki Y."/>
        </authorList>
    </citation>
    <scope>NUCLEOTIDE SEQUENCE [LARGE SCALE MRNA]</scope>
    <source>
        <strain>C57BL/6J</strain>
    </source>
</reference>
<reference key="2">
    <citation type="journal article" date="2004" name="Genome Res.">
        <title>The status, quality, and expansion of the NIH full-length cDNA project: the Mammalian Gene Collection (MGC).</title>
        <authorList>
            <consortium name="The MGC Project Team"/>
        </authorList>
    </citation>
    <scope>NUCLEOTIDE SEQUENCE [LARGE SCALE MRNA]</scope>
    <source>
        <strain>C57BL/6J</strain>
        <tissue>Mammary gland</tissue>
    </source>
</reference>
<keyword id="KW-0539">Nucleus</keyword>
<keyword id="KW-1185">Reference proteome</keyword>
<keyword id="KW-0687">Ribonucleoprotein</keyword>
<keyword id="KW-0690">Ribosome biogenesis</keyword>
<keyword id="KW-0698">rRNA processing</keyword>
<gene>
    <name type="primary">Nop10</name>
    <name type="synonym">Nola3</name>
</gene>
<dbReference type="EMBL" id="AK004120">
    <property type="protein sequence ID" value="BAB23180.1"/>
    <property type="molecule type" value="mRNA"/>
</dbReference>
<dbReference type="EMBL" id="AK012875">
    <property type="protein sequence ID" value="BAB28529.1"/>
    <property type="molecule type" value="mRNA"/>
</dbReference>
<dbReference type="EMBL" id="BC028497">
    <property type="protein sequence ID" value="AAH28497.1"/>
    <property type="molecule type" value="mRNA"/>
</dbReference>
<dbReference type="CCDS" id="CCDS38198.1"/>
<dbReference type="RefSeq" id="NP_079679.1">
    <property type="nucleotide sequence ID" value="NM_025403.4"/>
</dbReference>
<dbReference type="SMR" id="Q9CQS2"/>
<dbReference type="BioGRID" id="211277">
    <property type="interactions" value="2"/>
</dbReference>
<dbReference type="ComplexPortal" id="CPX-1124">
    <property type="entry name" value="Telomerase holoenzyme complex"/>
</dbReference>
<dbReference type="FunCoup" id="Q9CQS2">
    <property type="interactions" value="1876"/>
</dbReference>
<dbReference type="IntAct" id="Q9CQS2">
    <property type="interactions" value="2"/>
</dbReference>
<dbReference type="MINT" id="Q9CQS2"/>
<dbReference type="STRING" id="10090.ENSMUSP00000028553"/>
<dbReference type="iPTMnet" id="Q9CQS2"/>
<dbReference type="PhosphoSitePlus" id="Q9CQS2"/>
<dbReference type="PaxDb" id="10090-ENSMUSP00000028553"/>
<dbReference type="PeptideAtlas" id="Q9CQS2"/>
<dbReference type="ProteomicsDB" id="252990"/>
<dbReference type="Pumba" id="Q9CQS2"/>
<dbReference type="TopDownProteomics" id="Q9CQS2"/>
<dbReference type="Antibodypedia" id="41964">
    <property type="antibodies" value="60 antibodies from 17 providers"/>
</dbReference>
<dbReference type="DNASU" id="66181"/>
<dbReference type="Ensembl" id="ENSMUST00000028553.4">
    <property type="protein sequence ID" value="ENSMUSP00000028553.4"/>
    <property type="gene ID" value="ENSMUSG00000027133.4"/>
</dbReference>
<dbReference type="GeneID" id="66181"/>
<dbReference type="KEGG" id="mmu:66181"/>
<dbReference type="UCSC" id="uc008lor.2">
    <property type="organism name" value="mouse"/>
</dbReference>
<dbReference type="AGR" id="MGI:1913431"/>
<dbReference type="CTD" id="55505"/>
<dbReference type="MGI" id="MGI:1913431">
    <property type="gene designation" value="Nop10"/>
</dbReference>
<dbReference type="VEuPathDB" id="HostDB:ENSMUSG00000027133"/>
<dbReference type="eggNOG" id="KOG3503">
    <property type="taxonomic scope" value="Eukaryota"/>
</dbReference>
<dbReference type="GeneTree" id="ENSGT00390000012563"/>
<dbReference type="HOGENOM" id="CLU_184680_1_0_1"/>
<dbReference type="InParanoid" id="Q9CQS2"/>
<dbReference type="OMA" id="HRIIIKK"/>
<dbReference type="OrthoDB" id="13807at2759"/>
<dbReference type="PhylomeDB" id="Q9CQS2"/>
<dbReference type="TreeFam" id="TF300211"/>
<dbReference type="Reactome" id="R-MMU-171319">
    <property type="pathway name" value="Telomere Extension By Telomerase"/>
</dbReference>
<dbReference type="BioGRID-ORCS" id="66181">
    <property type="hits" value="24 hits in 75 CRISPR screens"/>
</dbReference>
<dbReference type="ChiTaRS" id="Nop10">
    <property type="organism name" value="mouse"/>
</dbReference>
<dbReference type="PRO" id="PR:Q9CQS2"/>
<dbReference type="Proteomes" id="UP000000589">
    <property type="component" value="Chromosome 2"/>
</dbReference>
<dbReference type="RNAct" id="Q9CQS2">
    <property type="molecule type" value="protein"/>
</dbReference>
<dbReference type="Bgee" id="ENSMUSG00000027133">
    <property type="expression patterns" value="Expressed in gonadal fat pad and 260 other cell types or tissues"/>
</dbReference>
<dbReference type="GO" id="GO:0031429">
    <property type="term" value="C:box H/ACA snoRNP complex"/>
    <property type="evidence" value="ECO:0007669"/>
    <property type="project" value="Ensembl"/>
</dbReference>
<dbReference type="GO" id="GO:0090661">
    <property type="term" value="C:box H/ACA telomerase RNP complex"/>
    <property type="evidence" value="ECO:0007669"/>
    <property type="project" value="Ensembl"/>
</dbReference>
<dbReference type="GO" id="GO:0015030">
    <property type="term" value="C:Cajal body"/>
    <property type="evidence" value="ECO:0007669"/>
    <property type="project" value="UniProtKB-SubCell"/>
</dbReference>
<dbReference type="GO" id="GO:0005697">
    <property type="term" value="C:telomerase holoenzyme complex"/>
    <property type="evidence" value="ECO:0000250"/>
    <property type="project" value="UniProtKB"/>
</dbReference>
<dbReference type="GO" id="GO:0034513">
    <property type="term" value="F:box H/ACA snoRNA binding"/>
    <property type="evidence" value="ECO:0007669"/>
    <property type="project" value="Ensembl"/>
</dbReference>
<dbReference type="GO" id="GO:0070034">
    <property type="term" value="F:telomerase RNA binding"/>
    <property type="evidence" value="ECO:0007669"/>
    <property type="project" value="Ensembl"/>
</dbReference>
<dbReference type="GO" id="GO:0000454">
    <property type="term" value="P:snoRNA guided rRNA pseudouridine synthesis"/>
    <property type="evidence" value="ECO:0007669"/>
    <property type="project" value="Ensembl"/>
</dbReference>
<dbReference type="GO" id="GO:0007004">
    <property type="term" value="P:telomere maintenance via telomerase"/>
    <property type="evidence" value="ECO:0000250"/>
    <property type="project" value="UniProtKB"/>
</dbReference>
<dbReference type="FunFam" id="2.20.28.40:FF:000002">
    <property type="entry name" value="H/ACA ribonucleoprotein complex subunit 3"/>
    <property type="match status" value="1"/>
</dbReference>
<dbReference type="Gene3D" id="2.20.28.40">
    <property type="entry name" value="H/ACA ribonucleoprotein complex, subunit Nop10"/>
    <property type="match status" value="1"/>
</dbReference>
<dbReference type="InterPro" id="IPR007264">
    <property type="entry name" value="H/ACA_rnp_Nop10"/>
</dbReference>
<dbReference type="InterPro" id="IPR036756">
    <property type="entry name" value="H/ACA_rnp_Nop10_sf"/>
</dbReference>
<dbReference type="PANTHER" id="PTHR13305:SF0">
    <property type="entry name" value="H_ACA RIBONUCLEOPROTEIN COMPLEX SUBUNIT 3"/>
    <property type="match status" value="1"/>
</dbReference>
<dbReference type="PANTHER" id="PTHR13305">
    <property type="entry name" value="RIBOSOME BIOGENESIS PROTEIN NOP10"/>
    <property type="match status" value="1"/>
</dbReference>
<dbReference type="Pfam" id="PF04135">
    <property type="entry name" value="Nop10p"/>
    <property type="match status" value="1"/>
</dbReference>
<dbReference type="SUPFAM" id="SSF144210">
    <property type="entry name" value="Nop10-like SnoRNP"/>
    <property type="match status" value="1"/>
</dbReference>
<protein>
    <recommendedName>
        <fullName>H/ACA ribonucleoprotein complex subunit 3</fullName>
    </recommendedName>
    <alternativeName>
        <fullName>Nucleolar protein 10</fullName>
    </alternativeName>
    <alternativeName>
        <fullName>Nucleolar protein family A member 3</fullName>
    </alternativeName>
    <alternativeName>
        <fullName>snoRNP protein NOP10</fullName>
    </alternativeName>
</protein>
<evidence type="ECO:0000250" key="1"/>
<evidence type="ECO:0000250" key="2">
    <source>
        <dbReference type="UniProtKB" id="Q9NPE3"/>
    </source>
</evidence>
<evidence type="ECO:0000305" key="3"/>
<accession>Q9CQS2</accession>
<feature type="chain" id="PRO_0000149002" description="H/ACA ribonucleoprotein complex subunit 3">
    <location>
        <begin position="1"/>
        <end position="64"/>
    </location>
</feature>
<sequence length="64" mass="7706">MFLQYYLNEQGDRVYTLKKFDPMGQQTCSAHPARFSPDDKYSRHRITIKKRFKVLMTQQPRPVL</sequence>
<proteinExistence type="inferred from homology"/>
<comment type="function">
    <text evidence="1">Required for ribosome biogenesis and telomere maintenance. Part of the H/ACA small nucleolar ribonucleoprotein (H/ACA snoRNP) complex, which catalyzes pseudouridylation of rRNA. This involves the isomerization of uridine such that the ribose is subsequently attached to C5, instead of the normal N1. Each rRNA can contain up to 100 pseudouridine ('psi') residues, which may serve to stabilize the conformation of rRNAs. May also be required for correct processing or intranuclear trafficking of TERC, the RNA component of the telomerase reverse transcriptase (TERT) holoenzyme (By similarity).</text>
</comment>
<comment type="subunit">
    <text evidence="2">Part of the H/ACA small nucleolar ribonucleoprotein (H/ACA snoRNP) complex, which contains NHP2/NOLA2, GAR1/NOLA1, NOP10/NOLA3, and DKC1/NOLA4, which is presumed to be the catalytic subunit. The complex contains a stable core formed by binding of one or two NOP10-DKC1 heterodimers to NHP2; GAR1 subsequently binds to this core via DKC1. The complex binds a box H/ACA small nucleolar RNA (snoRNA), which may target the specific site of modification within the RNA substrate. During assembly, the complex contains NAF1 instead of GAR1/NOLA1. The complex also interacts with TERC, which contains a 3'-terminal domain related to the box H/ACA snoRNAs. Specific interactions with snoRNAs or TERC are mediated by GAR1 and NHP2. Associates with NOLC1/NOPP140. H/ACA snoRNPs interact with the SMN complex, consisting of SMN1 or SMN2, GEMIN2/SIP1, DDX20/GEMIN3, and GEMIN4. This is mediated by interaction between GAR1 and SMN1 or SMN2. The SMN complex may be required for correct assembly of the H/ACA snoRNP complex. Component of the telomerase holoenzyme complex composed of one molecule of TERT, one molecule of WRAP53/TCAB1, two molecules of H/ACA ribonucleoprotein complex subunits DKC1, NOP10, NHP2 and GAR1, and a telomerase RNA template component (TERC). The telomerase holoenzyme complex is associated with TEP1, SMG6/EST1A and POT1.</text>
</comment>
<comment type="subcellular location">
    <subcellularLocation>
        <location evidence="1">Nucleus</location>
        <location evidence="1">Nucleolus</location>
    </subcellularLocation>
    <subcellularLocation>
        <location evidence="1">Nucleus</location>
        <location evidence="1">Cajal body</location>
    </subcellularLocation>
    <text evidence="1">Also localized to Cajal bodies (coiled bodies).</text>
</comment>
<comment type="similarity">
    <text evidence="3">Belongs to the NOP10 family.</text>
</comment>
<organism>
    <name type="scientific">Mus musculus</name>
    <name type="common">Mouse</name>
    <dbReference type="NCBI Taxonomy" id="10090"/>
    <lineage>
        <taxon>Eukaryota</taxon>
        <taxon>Metazoa</taxon>
        <taxon>Chordata</taxon>
        <taxon>Craniata</taxon>
        <taxon>Vertebrata</taxon>
        <taxon>Euteleostomi</taxon>
        <taxon>Mammalia</taxon>
        <taxon>Eutheria</taxon>
        <taxon>Euarchontoglires</taxon>
        <taxon>Glires</taxon>
        <taxon>Rodentia</taxon>
        <taxon>Myomorpha</taxon>
        <taxon>Muroidea</taxon>
        <taxon>Muridae</taxon>
        <taxon>Murinae</taxon>
        <taxon>Mus</taxon>
        <taxon>Mus</taxon>
    </lineage>
</organism>
<name>NOP10_MOUSE</name>